<gene>
    <name type="primary">BCL2L1</name>
    <name type="synonym">BCLX</name>
    <name type="synonym">BLC2L</name>
</gene>
<organism>
    <name type="scientific">Sus scrofa</name>
    <name type="common">Pig</name>
    <dbReference type="NCBI Taxonomy" id="9823"/>
    <lineage>
        <taxon>Eukaryota</taxon>
        <taxon>Metazoa</taxon>
        <taxon>Chordata</taxon>
        <taxon>Craniata</taxon>
        <taxon>Vertebrata</taxon>
        <taxon>Euteleostomi</taxon>
        <taxon>Mammalia</taxon>
        <taxon>Eutheria</taxon>
        <taxon>Laurasiatheria</taxon>
        <taxon>Artiodactyla</taxon>
        <taxon>Suina</taxon>
        <taxon>Suidae</taxon>
        <taxon>Sus</taxon>
    </lineage>
</organism>
<dbReference type="EMBL" id="AJ001203">
    <property type="protein sequence ID" value="CAA04597.1"/>
    <property type="molecule type" value="mRNA"/>
</dbReference>
<dbReference type="RefSeq" id="NP_999450.1">
    <property type="nucleotide sequence ID" value="NM_214285.1"/>
</dbReference>
<dbReference type="BMRB" id="O77737"/>
<dbReference type="SMR" id="O77737"/>
<dbReference type="FunCoup" id="O77737">
    <property type="interactions" value="1046"/>
</dbReference>
<dbReference type="STRING" id="9823.ENSSSCP00000033436"/>
<dbReference type="PaxDb" id="9823-ENSSSCP00000007697"/>
<dbReference type="PeptideAtlas" id="O77737"/>
<dbReference type="GeneID" id="397536"/>
<dbReference type="KEGG" id="ssc:397536"/>
<dbReference type="CTD" id="598"/>
<dbReference type="eggNOG" id="KOG4728">
    <property type="taxonomic scope" value="Eukaryota"/>
</dbReference>
<dbReference type="InParanoid" id="O77737"/>
<dbReference type="OrthoDB" id="6021377at2759"/>
<dbReference type="Proteomes" id="UP000008227">
    <property type="component" value="Unplaced"/>
</dbReference>
<dbReference type="Proteomes" id="UP000314985">
    <property type="component" value="Unplaced"/>
</dbReference>
<dbReference type="Proteomes" id="UP000694570">
    <property type="component" value="Unplaced"/>
</dbReference>
<dbReference type="Proteomes" id="UP000694571">
    <property type="component" value="Unplaced"/>
</dbReference>
<dbReference type="Proteomes" id="UP000694720">
    <property type="component" value="Unplaced"/>
</dbReference>
<dbReference type="Proteomes" id="UP000694722">
    <property type="component" value="Unplaced"/>
</dbReference>
<dbReference type="Proteomes" id="UP000694723">
    <property type="component" value="Unplaced"/>
</dbReference>
<dbReference type="Proteomes" id="UP000694724">
    <property type="component" value="Unplaced"/>
</dbReference>
<dbReference type="Proteomes" id="UP000694725">
    <property type="component" value="Unplaced"/>
</dbReference>
<dbReference type="Proteomes" id="UP000694726">
    <property type="component" value="Unplaced"/>
</dbReference>
<dbReference type="Proteomes" id="UP000694727">
    <property type="component" value="Unplaced"/>
</dbReference>
<dbReference type="Proteomes" id="UP000694728">
    <property type="component" value="Unplaced"/>
</dbReference>
<dbReference type="GO" id="GO:0005813">
    <property type="term" value="C:centrosome"/>
    <property type="evidence" value="ECO:0000250"/>
    <property type="project" value="UniProtKB"/>
</dbReference>
<dbReference type="GO" id="GO:0005737">
    <property type="term" value="C:cytoplasm"/>
    <property type="evidence" value="ECO:0000250"/>
    <property type="project" value="UniProtKB"/>
</dbReference>
<dbReference type="GO" id="GO:0005829">
    <property type="term" value="C:cytosol"/>
    <property type="evidence" value="ECO:0007669"/>
    <property type="project" value="UniProtKB-SubCell"/>
</dbReference>
<dbReference type="GO" id="GO:0005759">
    <property type="term" value="C:mitochondrial matrix"/>
    <property type="evidence" value="ECO:0007669"/>
    <property type="project" value="UniProtKB-SubCell"/>
</dbReference>
<dbReference type="GO" id="GO:0005741">
    <property type="term" value="C:mitochondrial outer membrane"/>
    <property type="evidence" value="ECO:0000318"/>
    <property type="project" value="GO_Central"/>
</dbReference>
<dbReference type="GO" id="GO:0031965">
    <property type="term" value="C:nuclear membrane"/>
    <property type="evidence" value="ECO:0007669"/>
    <property type="project" value="UniProtKB-SubCell"/>
</dbReference>
<dbReference type="GO" id="GO:0030672">
    <property type="term" value="C:synaptic vesicle membrane"/>
    <property type="evidence" value="ECO:0007669"/>
    <property type="project" value="UniProtKB-SubCell"/>
</dbReference>
<dbReference type="GO" id="GO:0015267">
    <property type="term" value="F:channel activity"/>
    <property type="evidence" value="ECO:0000318"/>
    <property type="project" value="GO_Central"/>
</dbReference>
<dbReference type="GO" id="GO:0006897">
    <property type="term" value="P:endocytosis"/>
    <property type="evidence" value="ECO:0007669"/>
    <property type="project" value="UniProtKB-KW"/>
</dbReference>
<dbReference type="GO" id="GO:0097192">
    <property type="term" value="P:extrinsic apoptotic signaling pathway in absence of ligand"/>
    <property type="evidence" value="ECO:0000318"/>
    <property type="project" value="GO_Central"/>
</dbReference>
<dbReference type="GO" id="GO:0008630">
    <property type="term" value="P:intrinsic apoptotic signaling pathway in response to DNA damage"/>
    <property type="evidence" value="ECO:0000318"/>
    <property type="project" value="GO_Central"/>
</dbReference>
<dbReference type="GO" id="GO:1902236">
    <property type="term" value="P:negative regulation of endoplasmic reticulum stress-induced intrinsic apoptotic signaling pathway"/>
    <property type="evidence" value="ECO:0000250"/>
    <property type="project" value="UniProtKB"/>
</dbReference>
<dbReference type="GO" id="GO:1900118">
    <property type="term" value="P:negative regulation of execution phase of apoptosis"/>
    <property type="evidence" value="ECO:0000250"/>
    <property type="project" value="UniProtKB"/>
</dbReference>
<dbReference type="GO" id="GO:0043065">
    <property type="term" value="P:positive regulation of apoptotic process"/>
    <property type="evidence" value="ECO:0000318"/>
    <property type="project" value="GO_Central"/>
</dbReference>
<dbReference type="GO" id="GO:0032465">
    <property type="term" value="P:regulation of cytokinesis"/>
    <property type="evidence" value="ECO:0000250"/>
    <property type="project" value="UniProtKB"/>
</dbReference>
<dbReference type="GO" id="GO:0001836">
    <property type="term" value="P:release of cytochrome c from mitochondria"/>
    <property type="evidence" value="ECO:0000318"/>
    <property type="project" value="GO_Central"/>
</dbReference>
<dbReference type="CDD" id="cd06845">
    <property type="entry name" value="Bcl-2_like"/>
    <property type="match status" value="1"/>
</dbReference>
<dbReference type="FunFam" id="1.10.437.10:FF:000003">
    <property type="entry name" value="Bcl-2-like protein 1"/>
    <property type="match status" value="1"/>
</dbReference>
<dbReference type="Gene3D" id="1.10.437.10">
    <property type="entry name" value="Blc2-like"/>
    <property type="match status" value="1"/>
</dbReference>
<dbReference type="InterPro" id="IPR013279">
    <property type="entry name" value="Apop_reg_BclX"/>
</dbReference>
<dbReference type="InterPro" id="IPR036834">
    <property type="entry name" value="Bcl-2-like_sf"/>
</dbReference>
<dbReference type="InterPro" id="IPR046371">
    <property type="entry name" value="Bcl-2_BH1-3"/>
</dbReference>
<dbReference type="InterPro" id="IPR026298">
    <property type="entry name" value="Bcl-2_fam"/>
</dbReference>
<dbReference type="InterPro" id="IPR002475">
    <property type="entry name" value="Bcl2-like"/>
</dbReference>
<dbReference type="InterPro" id="IPR004725">
    <property type="entry name" value="Bcl2/BclX"/>
</dbReference>
<dbReference type="InterPro" id="IPR020717">
    <property type="entry name" value="Bcl2_BH1_motif_CS"/>
</dbReference>
<dbReference type="InterPro" id="IPR020726">
    <property type="entry name" value="Bcl2_BH2_motif_CS"/>
</dbReference>
<dbReference type="InterPro" id="IPR020728">
    <property type="entry name" value="Bcl2_BH3_motif_CS"/>
</dbReference>
<dbReference type="InterPro" id="IPR003093">
    <property type="entry name" value="Bcl2_BH4"/>
</dbReference>
<dbReference type="InterPro" id="IPR020731">
    <property type="entry name" value="Bcl2_BH4_motif_CS"/>
</dbReference>
<dbReference type="NCBIfam" id="TIGR00865">
    <property type="entry name" value="bcl-2"/>
    <property type="match status" value="1"/>
</dbReference>
<dbReference type="PANTHER" id="PTHR11256">
    <property type="entry name" value="BCL-2 RELATED"/>
    <property type="match status" value="1"/>
</dbReference>
<dbReference type="PANTHER" id="PTHR11256:SF12">
    <property type="entry name" value="BCL-2-LIKE PROTEIN 1"/>
    <property type="match status" value="1"/>
</dbReference>
<dbReference type="Pfam" id="PF00452">
    <property type="entry name" value="Bcl-2"/>
    <property type="match status" value="1"/>
</dbReference>
<dbReference type="Pfam" id="PF02180">
    <property type="entry name" value="BH4"/>
    <property type="match status" value="1"/>
</dbReference>
<dbReference type="PRINTS" id="PR01864">
    <property type="entry name" value="APOPREGBCLX"/>
</dbReference>
<dbReference type="PRINTS" id="PR01862">
    <property type="entry name" value="BCL2FAMILY"/>
</dbReference>
<dbReference type="SMART" id="SM00337">
    <property type="entry name" value="BCL"/>
    <property type="match status" value="1"/>
</dbReference>
<dbReference type="SMART" id="SM00265">
    <property type="entry name" value="BH4"/>
    <property type="match status" value="1"/>
</dbReference>
<dbReference type="SUPFAM" id="SSF56854">
    <property type="entry name" value="Bcl-2 inhibitors of programmed cell death"/>
    <property type="match status" value="1"/>
</dbReference>
<dbReference type="PROSITE" id="PS50062">
    <property type="entry name" value="BCL2_FAMILY"/>
    <property type="match status" value="1"/>
</dbReference>
<dbReference type="PROSITE" id="PS01080">
    <property type="entry name" value="BH1"/>
    <property type="match status" value="1"/>
</dbReference>
<dbReference type="PROSITE" id="PS01258">
    <property type="entry name" value="BH2"/>
    <property type="match status" value="1"/>
</dbReference>
<dbReference type="PROSITE" id="PS01259">
    <property type="entry name" value="BH3"/>
    <property type="match status" value="1"/>
</dbReference>
<dbReference type="PROSITE" id="PS01260">
    <property type="entry name" value="BH4_1"/>
    <property type="match status" value="1"/>
</dbReference>
<dbReference type="PROSITE" id="PS50063">
    <property type="entry name" value="BH4_2"/>
    <property type="match status" value="1"/>
</dbReference>
<proteinExistence type="evidence at transcript level"/>
<reference key="1">
    <citation type="journal article" date="1999" name="J. Mol. Cell. Cardiol.">
        <title>Quantification of cardioprotective gene expression in porcine short-term hibernating myocardium.</title>
        <authorList>
            <person name="Bartling B."/>
            <person name="Hoffmann J."/>
            <person name="Holtz J."/>
            <person name="Schulz R."/>
            <person name="Heusch G."/>
            <person name="Darmer D."/>
        </authorList>
    </citation>
    <scope>NUCLEOTIDE SEQUENCE [MRNA]</scope>
</reference>
<comment type="function">
    <text evidence="1 3">Potent inhibitor of cell death. Inhibits activation of caspases. Appears to regulate cell death by blocking the voltage-dependent anion channel (VDAC) by binding to it and preventing the release of the caspase activator, CYC1, from the mitochondrial membrane. Also acts as a regulator of G2 checkpoint and progression to cytokinesis during mitosis. Regulates presynaptic plasticity, including neurotransmitter release and recovery, number of axonal mitochondria as well as size and number of synaptic vesicle clusters. During synaptic stimulation, increases ATP availability from mitochondria through regulation of mitochondrial membrane ATP synthase F(1)F(0) activity and regulates endocytic vesicle retrieval in hippocampal neurons through association with DMN1L and stimulation of its GTPase activity in synaptic vesicles. May attenuate inflammation impairing NLRP1-inflammasome activation, hence CASP1 activation and IL1B release (By similarity).</text>
</comment>
<comment type="subunit">
    <text evidence="2 3 4">Homodimer. Heterodimers with BAX, BAK or BCL2. Heterodimerization with BAX does not seem to be required for anti-apoptotic activity. Interacts with BCL2L11. Interacts with BAD. Interacts with SIVA1 isoform 1; the interaction inhibits the anti-apoptotic activity. Interacts with BECN1 and PGAM5. Interacts with IKZF3. Interacts with HEBP2. Interacts with BOP. Interacts with p53/TP53 and BBC3; interaction with BBC3 disrupts the interaction with p53/TP53. Interacts with DNM1L and CLTA; DNM1L and BCL2L1 may form a complex in synaptic vesicles that also contains clathrin and MFF. Interacts with ATP5F1A and ATP5F1B; the interactions mediate the association of BCL2L1 with the mitochondrial membrane ATP synthase F(1)F(0) ATP synthase. Interacts with VDAC1. Interacts (via the loop between motifs BH4 and BH3) with NLRP1 (via LRR repeats), but not with NLRP2, NLRP3, NLRP4, PYCARD, nor MEFV. Interacts with BCL2L11 (via BH3) (By similarity). Interacts with RNF183 (By similarity). Interacts with GIMAP3/IAN4 (By similarity). Interacts with GIMAP5 and HSPA8/HSC70; the interaction between HSPA8 and BCL2L1 is impaired in the absence of GIMAP5 (By similarity). Interacts with CLU (isoform 4); this interaction releases and activates BAX and promotes cell death (By similarity).</text>
</comment>
<comment type="subcellular location">
    <subcellularLocation>
        <location evidence="1">Mitochondrion membrane</location>
        <topology evidence="1">Single-pass membrane protein</topology>
    </subcellularLocation>
    <subcellularLocation>
        <location evidence="1">Nucleus membrane</location>
        <topology evidence="1">Single-pass membrane protein</topology>
        <orientation evidence="1">Cytoplasmic side</orientation>
    </subcellularLocation>
    <subcellularLocation>
        <location evidence="1">Mitochondrion matrix</location>
    </subcellularLocation>
    <subcellularLocation>
        <location evidence="1">Cytoplasm</location>
        <location evidence="1">Cytoskeleton</location>
        <location evidence="1">Microtubule organizing center</location>
        <location evidence="1">Centrosome</location>
    </subcellularLocation>
    <subcellularLocation>
        <location evidence="1">Cytoplasm</location>
        <location evidence="1">Cytosol</location>
    </subcellularLocation>
    <subcellularLocation>
        <location evidence="1">Cytoplasmic vesicle</location>
        <location evidence="1">Secretory vesicle</location>
        <location evidence="1">Synaptic vesicle membrane</location>
    </subcellularLocation>
    <text evidence="1">After neuronal stimulation, translocates from cytosol to synaptic vesicle and mitochondrion membrane in a calmodulin-dependent manner. Localizes to the centrosome when phosphorylated at Ser-49 (By similarity).</text>
</comment>
<comment type="domain">
    <text>The BH4 motif is required for anti-apoptotic activity. The BH1 and BH2 motifs are required for both heterodimerization with other Bcl-2 family members and for repression of cell death.</text>
</comment>
<comment type="domain">
    <text evidence="3">The loop between motifs BH4 and BH3 is required for the interaction with NLRP1.</text>
</comment>
<comment type="PTM">
    <text evidence="1">Proteolytically cleaved by caspases during apoptosis. The cleaved protein, lacking the BH4 motif, has pro-apoptotic activity.</text>
</comment>
<comment type="PTM">
    <text evidence="1">Phosphorylated on Ser-62 by CDK1. This phosphorylation is partial in normal mitotic cells, but complete in G2-arrested cells upon DNA-damage, thus promoting subsequent apoptosis probably by triggering caspases-mediated proteolysis. Phosphorylated by PLK3, leading to regulate the G2 checkpoint and progression to cytokinesis during mitosis. Phosphorylation at Ser-49 appears during the S phase and G2, disappears rapidly in early mitosis during prometaphase, metaphase and early anaphase, and re-appears during telophase and cytokinesis (By similarity).</text>
</comment>
<comment type="PTM">
    <text evidence="3">Ubiquitinated by RNF183 during prolonged ER stress, leading to degradation by the proteosome.</text>
</comment>
<comment type="similarity">
    <text evidence="7">Belongs to the Bcl-2 family.</text>
</comment>
<feature type="chain" id="PRO_0000143064" description="Bcl-2-like protein 1">
    <location>
        <begin position="1"/>
        <end position="233"/>
    </location>
</feature>
<feature type="transmembrane region" description="Helical" evidence="5">
    <location>
        <begin position="210"/>
        <end position="226"/>
    </location>
</feature>
<feature type="region of interest" description="Disordered" evidence="6">
    <location>
        <begin position="29"/>
        <end position="71"/>
    </location>
</feature>
<feature type="short sequence motif" description="BH4">
    <location>
        <begin position="4"/>
        <end position="24"/>
    </location>
</feature>
<feature type="short sequence motif" description="BH3">
    <location>
        <begin position="86"/>
        <end position="100"/>
    </location>
</feature>
<feature type="short sequence motif" description="BH1">
    <location>
        <begin position="129"/>
        <end position="148"/>
    </location>
</feature>
<feature type="short sequence motif" description="BH2">
    <location>
        <begin position="180"/>
        <end position="195"/>
    </location>
</feature>
<feature type="modified residue" description="Phosphoserine; by PLK3" evidence="3">
    <location>
        <position position="49"/>
    </location>
</feature>
<feature type="modified residue" description="Phosphoserine; by CDK1" evidence="3">
    <location>
        <position position="62"/>
    </location>
</feature>
<protein>
    <recommendedName>
        <fullName>Bcl-2-like protein 1</fullName>
        <shortName>Bcl2-L-1</shortName>
    </recommendedName>
    <alternativeName>
        <fullName>Apoptosis regulator Bcl-X</fullName>
    </alternativeName>
</protein>
<sequence length="233" mass="26061">MSQSNRELVVDFLSYKLSQKGYSWSQFTDVEENRTEAPEGTESEAETPSAINGNPSWHLADSPAVNGATGHSSSLDAREVIPMAAVKQALREAGDEFELRYRRAFSDLTSQLHITPGTAYQSFEQVLNELFRDGVNWGRIVAFFSFGGALCVESVDKEMQVLVSRIATWMATYLNDHLEPWIQENGGWDTFVELYGNNAAAESRKGQERFNRWFLTGMTLAGVVLLGSLFSRK</sequence>
<keyword id="KW-0053">Apoptosis</keyword>
<keyword id="KW-0963">Cytoplasm</keyword>
<keyword id="KW-0968">Cytoplasmic vesicle</keyword>
<keyword id="KW-0206">Cytoskeleton</keyword>
<keyword id="KW-0254">Endocytosis</keyword>
<keyword id="KW-0472">Membrane</keyword>
<keyword id="KW-0496">Mitochondrion</keyword>
<keyword id="KW-0539">Nucleus</keyword>
<keyword id="KW-0597">Phosphoprotein</keyword>
<keyword id="KW-1185">Reference proteome</keyword>
<keyword id="KW-0770">Synapse</keyword>
<keyword id="KW-0812">Transmembrane</keyword>
<keyword id="KW-1133">Transmembrane helix</keyword>
<keyword id="KW-0832">Ubl conjugation</keyword>
<evidence type="ECO:0000250" key="1"/>
<evidence type="ECO:0000250" key="2">
    <source>
        <dbReference type="UniProtKB" id="P53563"/>
    </source>
</evidence>
<evidence type="ECO:0000250" key="3">
    <source>
        <dbReference type="UniProtKB" id="Q07817"/>
    </source>
</evidence>
<evidence type="ECO:0000250" key="4">
    <source>
        <dbReference type="UniProtKB" id="Q64373"/>
    </source>
</evidence>
<evidence type="ECO:0000255" key="5"/>
<evidence type="ECO:0000256" key="6">
    <source>
        <dbReference type="SAM" id="MobiDB-lite"/>
    </source>
</evidence>
<evidence type="ECO:0000305" key="7"/>
<accession>O77737</accession>
<name>B2CL1_PIG</name>